<dbReference type="EMBL" id="AF134131">
    <property type="protein sequence ID" value="AAD28778.1"/>
    <property type="molecule type" value="mRNA"/>
</dbReference>
<dbReference type="EMBL" id="AC084807">
    <property type="protein sequence ID" value="AAK43481.1"/>
    <property type="molecule type" value="Genomic_DNA"/>
</dbReference>
<dbReference type="EMBL" id="CP002684">
    <property type="protein sequence ID" value="AEE32039.1"/>
    <property type="molecule type" value="Genomic_DNA"/>
</dbReference>
<dbReference type="EMBL" id="CP002684">
    <property type="protein sequence ID" value="ANM60500.1"/>
    <property type="molecule type" value="Genomic_DNA"/>
</dbReference>
<dbReference type="EMBL" id="AF410304">
    <property type="protein sequence ID" value="AAK95290.1"/>
    <property type="molecule type" value="mRNA"/>
</dbReference>
<dbReference type="EMBL" id="BT002251">
    <property type="protein sequence ID" value="AAN72262.1"/>
    <property type="molecule type" value="mRNA"/>
</dbReference>
<dbReference type="EMBL" id="AK221702">
    <property type="protein sequence ID" value="BAD95419.1"/>
    <property type="molecule type" value="mRNA"/>
</dbReference>
<dbReference type="EMBL" id="AB015859">
    <property type="protein sequence ID" value="BAA84769.1"/>
    <property type="molecule type" value="mRNA"/>
</dbReference>
<dbReference type="PIR" id="T52313">
    <property type="entry name" value="T52313"/>
</dbReference>
<dbReference type="RefSeq" id="NP_001319163.1">
    <molecule id="Q9XF91-1"/>
    <property type="nucleotide sequence ID" value="NM_001333231.1"/>
</dbReference>
<dbReference type="RefSeq" id="NP_175092.1">
    <molecule id="Q9XF91-1"/>
    <property type="nucleotide sequence ID" value="NM_103552.4"/>
</dbReference>
<dbReference type="SMR" id="Q9XF91"/>
<dbReference type="BioGRID" id="26258">
    <property type="interactions" value="8"/>
</dbReference>
<dbReference type="FunCoup" id="Q9XF91">
    <property type="interactions" value="1318"/>
</dbReference>
<dbReference type="STRING" id="3702.Q9XF91"/>
<dbReference type="iPTMnet" id="Q9XF91"/>
<dbReference type="PaxDb" id="3702-AT1G44575.1"/>
<dbReference type="ProteomicsDB" id="226005">
    <molecule id="Q9XF91-1"/>
</dbReference>
<dbReference type="EnsemblPlants" id="AT1G44575.1">
    <molecule id="Q9XF91-1"/>
    <property type="protein sequence ID" value="AT1G44575.1"/>
    <property type="gene ID" value="AT1G44575"/>
</dbReference>
<dbReference type="EnsemblPlants" id="AT1G44575.3">
    <molecule id="Q9XF91-1"/>
    <property type="protein sequence ID" value="AT1G44575.3"/>
    <property type="gene ID" value="AT1G44575"/>
</dbReference>
<dbReference type="GeneID" id="841033"/>
<dbReference type="Gramene" id="AT1G44575.1">
    <molecule id="Q9XF91-1"/>
    <property type="protein sequence ID" value="AT1G44575.1"/>
    <property type="gene ID" value="AT1G44575"/>
</dbReference>
<dbReference type="Gramene" id="AT1G44575.3">
    <molecule id="Q9XF91-1"/>
    <property type="protein sequence ID" value="AT1G44575.3"/>
    <property type="gene ID" value="AT1G44575"/>
</dbReference>
<dbReference type="KEGG" id="ath:AT1G44575"/>
<dbReference type="Araport" id="AT1G44575"/>
<dbReference type="TAIR" id="AT1G44575">
    <property type="gene designation" value="NPQ4"/>
</dbReference>
<dbReference type="eggNOG" id="ENOG502SI3U">
    <property type="taxonomic scope" value="Eukaryota"/>
</dbReference>
<dbReference type="HOGENOM" id="CLU_090803_0_0_1"/>
<dbReference type="InParanoid" id="Q9XF91"/>
<dbReference type="OMA" id="NAAQISW"/>
<dbReference type="OrthoDB" id="1098636at2759"/>
<dbReference type="PhylomeDB" id="Q9XF91"/>
<dbReference type="BioCyc" id="MetaCyc:AT1G44575-MONOMER"/>
<dbReference type="CD-CODE" id="4299E36E">
    <property type="entry name" value="Nucleolus"/>
</dbReference>
<dbReference type="PRO" id="PR:Q9XF91"/>
<dbReference type="Proteomes" id="UP000006548">
    <property type="component" value="Chromosome 1"/>
</dbReference>
<dbReference type="ExpressionAtlas" id="Q9XF91">
    <property type="expression patterns" value="baseline and differential"/>
</dbReference>
<dbReference type="GO" id="GO:0009507">
    <property type="term" value="C:chloroplast"/>
    <property type="evidence" value="ECO:0007005"/>
    <property type="project" value="TAIR"/>
</dbReference>
<dbReference type="GO" id="GO:0009534">
    <property type="term" value="C:chloroplast thylakoid"/>
    <property type="evidence" value="ECO:0007005"/>
    <property type="project" value="TAIR"/>
</dbReference>
<dbReference type="GO" id="GO:0009535">
    <property type="term" value="C:chloroplast thylakoid membrane"/>
    <property type="evidence" value="ECO:0007005"/>
    <property type="project" value="TAIR"/>
</dbReference>
<dbReference type="GO" id="GO:0005634">
    <property type="term" value="C:nucleus"/>
    <property type="evidence" value="ECO:0007005"/>
    <property type="project" value="TAIR"/>
</dbReference>
<dbReference type="GO" id="GO:0009523">
    <property type="term" value="C:photosystem II"/>
    <property type="evidence" value="ECO:0007669"/>
    <property type="project" value="UniProtKB-KW"/>
</dbReference>
<dbReference type="GO" id="GO:0009517">
    <property type="term" value="C:PSII associated light-harvesting complex II"/>
    <property type="evidence" value="ECO:0000304"/>
    <property type="project" value="TAIR"/>
</dbReference>
<dbReference type="GO" id="GO:0009579">
    <property type="term" value="C:thylakoid"/>
    <property type="evidence" value="ECO:0007005"/>
    <property type="project" value="TAIR"/>
</dbReference>
<dbReference type="GO" id="GO:0016168">
    <property type="term" value="F:chlorophyll binding"/>
    <property type="evidence" value="ECO:0000304"/>
    <property type="project" value="TAIR"/>
</dbReference>
<dbReference type="GO" id="GO:0003729">
    <property type="term" value="F:mRNA binding"/>
    <property type="evidence" value="ECO:0000314"/>
    <property type="project" value="TAIR"/>
</dbReference>
<dbReference type="GO" id="GO:0019904">
    <property type="term" value="F:protein domain specific binding"/>
    <property type="evidence" value="ECO:0000353"/>
    <property type="project" value="CAFA"/>
</dbReference>
<dbReference type="GO" id="GO:0051738">
    <property type="term" value="F:xanthophyll binding"/>
    <property type="evidence" value="ECO:0000304"/>
    <property type="project" value="TAIR"/>
</dbReference>
<dbReference type="GO" id="GO:0010196">
    <property type="term" value="P:nonphotochemical quenching"/>
    <property type="evidence" value="ECO:0000315"/>
    <property type="project" value="TAIR"/>
</dbReference>
<dbReference type="GO" id="GO:0015979">
    <property type="term" value="P:photosynthesis"/>
    <property type="evidence" value="ECO:0007669"/>
    <property type="project" value="UniProtKB-KW"/>
</dbReference>
<dbReference type="GO" id="GO:0010027">
    <property type="term" value="P:thylakoid membrane organization"/>
    <property type="evidence" value="ECO:0000315"/>
    <property type="project" value="TAIR"/>
</dbReference>
<dbReference type="FunFam" id="1.10.3460.10:FF:000014">
    <property type="entry name" value="BnaA08g04420D protein"/>
    <property type="match status" value="1"/>
</dbReference>
<dbReference type="FunFam" id="1.10.3460.10:FF:000008">
    <property type="entry name" value="Photosystem II 22 kDa protein, chloroplastic"/>
    <property type="match status" value="1"/>
</dbReference>
<dbReference type="Gene3D" id="1.10.3460.10">
    <property type="entry name" value="Chlorophyll a/b binding protein domain"/>
    <property type="match status" value="2"/>
</dbReference>
<dbReference type="InterPro" id="IPR022796">
    <property type="entry name" value="Chloroa_b-bind"/>
</dbReference>
<dbReference type="PANTHER" id="PTHR14154">
    <property type="entry name" value="UPF0041 BRAIN PROTEIN 44-RELATED"/>
    <property type="match status" value="1"/>
</dbReference>
<dbReference type="Pfam" id="PF00504">
    <property type="entry name" value="Chloroa_b-bind"/>
    <property type="match status" value="1"/>
</dbReference>
<dbReference type="SUPFAM" id="SSF103511">
    <property type="entry name" value="Chlorophyll a-b binding protein"/>
    <property type="match status" value="1"/>
</dbReference>
<gene>
    <name evidence="5" type="primary">PSBS</name>
    <name evidence="6" type="synonym">NPQ4</name>
    <name type="ordered locus">At1g44575</name>
    <name type="ORF">T18F15.3</name>
</gene>
<evidence type="ECO:0000255" key="1"/>
<evidence type="ECO:0000269" key="2">
    <source>
    </source>
</evidence>
<evidence type="ECO:0000269" key="3">
    <source>
    </source>
</evidence>
<evidence type="ECO:0000269" key="4">
    <source>
    </source>
</evidence>
<evidence type="ECO:0000303" key="5">
    <source>
    </source>
</evidence>
<evidence type="ECO:0000303" key="6">
    <source>
    </source>
</evidence>
<evidence type="ECO:0000305" key="7"/>
<reference key="1">
    <citation type="journal article" date="1999" name="Trends Plant Sci.">
        <title>A guide to the Lhc genes and their relatives in Arabidopsis.</title>
        <authorList>
            <person name="Jansson S."/>
        </authorList>
    </citation>
    <scope>NUCLEOTIDE SEQUENCE [MRNA]</scope>
</reference>
<reference key="2">
    <citation type="journal article" date="2000" name="Nature">
        <title>Sequence and analysis of chromosome 1 of the plant Arabidopsis thaliana.</title>
        <authorList>
            <person name="Theologis A."/>
            <person name="Ecker J.R."/>
            <person name="Palm C.J."/>
            <person name="Federspiel N.A."/>
            <person name="Kaul S."/>
            <person name="White O."/>
            <person name="Alonso J."/>
            <person name="Altafi H."/>
            <person name="Araujo R."/>
            <person name="Bowman C.L."/>
            <person name="Brooks S.Y."/>
            <person name="Buehler E."/>
            <person name="Chan A."/>
            <person name="Chao Q."/>
            <person name="Chen H."/>
            <person name="Cheuk R.F."/>
            <person name="Chin C.W."/>
            <person name="Chung M.K."/>
            <person name="Conn L."/>
            <person name="Conway A.B."/>
            <person name="Conway A.R."/>
            <person name="Creasy T.H."/>
            <person name="Dewar K."/>
            <person name="Dunn P."/>
            <person name="Etgu P."/>
            <person name="Feldblyum T.V."/>
            <person name="Feng J.-D."/>
            <person name="Fong B."/>
            <person name="Fujii C.Y."/>
            <person name="Gill J.E."/>
            <person name="Goldsmith A.D."/>
            <person name="Haas B."/>
            <person name="Hansen N.F."/>
            <person name="Hughes B."/>
            <person name="Huizar L."/>
            <person name="Hunter J.L."/>
            <person name="Jenkins J."/>
            <person name="Johnson-Hopson C."/>
            <person name="Khan S."/>
            <person name="Khaykin E."/>
            <person name="Kim C.J."/>
            <person name="Koo H.L."/>
            <person name="Kremenetskaia I."/>
            <person name="Kurtz D.B."/>
            <person name="Kwan A."/>
            <person name="Lam B."/>
            <person name="Langin-Hooper S."/>
            <person name="Lee A."/>
            <person name="Lee J.M."/>
            <person name="Lenz C.A."/>
            <person name="Li J.H."/>
            <person name="Li Y.-P."/>
            <person name="Lin X."/>
            <person name="Liu S.X."/>
            <person name="Liu Z.A."/>
            <person name="Luros J.S."/>
            <person name="Maiti R."/>
            <person name="Marziali A."/>
            <person name="Militscher J."/>
            <person name="Miranda M."/>
            <person name="Nguyen M."/>
            <person name="Nierman W.C."/>
            <person name="Osborne B.I."/>
            <person name="Pai G."/>
            <person name="Peterson J."/>
            <person name="Pham P.K."/>
            <person name="Rizzo M."/>
            <person name="Rooney T."/>
            <person name="Rowley D."/>
            <person name="Sakano H."/>
            <person name="Salzberg S.L."/>
            <person name="Schwartz J.R."/>
            <person name="Shinn P."/>
            <person name="Southwick A.M."/>
            <person name="Sun H."/>
            <person name="Tallon L.J."/>
            <person name="Tambunga G."/>
            <person name="Toriumi M.J."/>
            <person name="Town C.D."/>
            <person name="Utterback T."/>
            <person name="Van Aken S."/>
            <person name="Vaysberg M."/>
            <person name="Vysotskaia V.S."/>
            <person name="Walker M."/>
            <person name="Wu D."/>
            <person name="Yu G."/>
            <person name="Fraser C.M."/>
            <person name="Venter J.C."/>
            <person name="Davis R.W."/>
        </authorList>
    </citation>
    <scope>NUCLEOTIDE SEQUENCE [LARGE SCALE GENOMIC DNA]</scope>
    <source>
        <strain>cv. Columbia</strain>
    </source>
</reference>
<reference key="3">
    <citation type="journal article" date="2017" name="Plant J.">
        <title>Araport11: a complete reannotation of the Arabidopsis thaliana reference genome.</title>
        <authorList>
            <person name="Cheng C.Y."/>
            <person name="Krishnakumar V."/>
            <person name="Chan A.P."/>
            <person name="Thibaud-Nissen F."/>
            <person name="Schobel S."/>
            <person name="Town C.D."/>
        </authorList>
    </citation>
    <scope>GENOME REANNOTATION</scope>
    <source>
        <strain>cv. Columbia</strain>
    </source>
</reference>
<reference key="4">
    <citation type="journal article" date="2003" name="Science">
        <title>Empirical analysis of transcriptional activity in the Arabidopsis genome.</title>
        <authorList>
            <person name="Yamada K."/>
            <person name="Lim J."/>
            <person name="Dale J.M."/>
            <person name="Chen H."/>
            <person name="Shinn P."/>
            <person name="Palm C.J."/>
            <person name="Southwick A.M."/>
            <person name="Wu H.C."/>
            <person name="Kim C.J."/>
            <person name="Nguyen M."/>
            <person name="Pham P.K."/>
            <person name="Cheuk R.F."/>
            <person name="Karlin-Newmann G."/>
            <person name="Liu S.X."/>
            <person name="Lam B."/>
            <person name="Sakano H."/>
            <person name="Wu T."/>
            <person name="Yu G."/>
            <person name="Miranda M."/>
            <person name="Quach H.L."/>
            <person name="Tripp M."/>
            <person name="Chang C.H."/>
            <person name="Lee J.M."/>
            <person name="Toriumi M.J."/>
            <person name="Chan M.M."/>
            <person name="Tang C.C."/>
            <person name="Onodera C.S."/>
            <person name="Deng J.M."/>
            <person name="Akiyama K."/>
            <person name="Ansari Y."/>
            <person name="Arakawa T."/>
            <person name="Banh J."/>
            <person name="Banno F."/>
            <person name="Bowser L."/>
            <person name="Brooks S.Y."/>
            <person name="Carninci P."/>
            <person name="Chao Q."/>
            <person name="Choy N."/>
            <person name="Enju A."/>
            <person name="Goldsmith A.D."/>
            <person name="Gurjal M."/>
            <person name="Hansen N.F."/>
            <person name="Hayashizaki Y."/>
            <person name="Johnson-Hopson C."/>
            <person name="Hsuan V.W."/>
            <person name="Iida K."/>
            <person name="Karnes M."/>
            <person name="Khan S."/>
            <person name="Koesema E."/>
            <person name="Ishida J."/>
            <person name="Jiang P.X."/>
            <person name="Jones T."/>
            <person name="Kawai J."/>
            <person name="Kamiya A."/>
            <person name="Meyers C."/>
            <person name="Nakajima M."/>
            <person name="Narusaka M."/>
            <person name="Seki M."/>
            <person name="Sakurai T."/>
            <person name="Satou M."/>
            <person name="Tamse R."/>
            <person name="Vaysberg M."/>
            <person name="Wallender E.K."/>
            <person name="Wong C."/>
            <person name="Yamamura Y."/>
            <person name="Yuan S."/>
            <person name="Shinozaki K."/>
            <person name="Davis R.W."/>
            <person name="Theologis A."/>
            <person name="Ecker J.R."/>
        </authorList>
    </citation>
    <scope>NUCLEOTIDE SEQUENCE [LARGE SCALE MRNA]</scope>
    <source>
        <strain>cv. Columbia</strain>
    </source>
</reference>
<reference key="5">
    <citation type="submission" date="2005-03" db="EMBL/GenBank/DDBJ databases">
        <title>Large-scale analysis of RIKEN Arabidopsis full-length (RAFL) cDNAs.</title>
        <authorList>
            <person name="Totoki Y."/>
            <person name="Seki M."/>
            <person name="Ishida J."/>
            <person name="Nakajima M."/>
            <person name="Enju A."/>
            <person name="Kamiya A."/>
            <person name="Narusaka M."/>
            <person name="Shin-i T."/>
            <person name="Nakagawa M."/>
            <person name="Sakamoto N."/>
            <person name="Oishi K."/>
            <person name="Kohara Y."/>
            <person name="Kobayashi M."/>
            <person name="Toyoda A."/>
            <person name="Sakaki Y."/>
            <person name="Sakurai T."/>
            <person name="Iida K."/>
            <person name="Akiyama K."/>
            <person name="Satou M."/>
            <person name="Toyoda T."/>
            <person name="Konagaya A."/>
            <person name="Carninci P."/>
            <person name="Kawai J."/>
            <person name="Hayashizaki Y."/>
            <person name="Shinozaki K."/>
        </authorList>
    </citation>
    <scope>NUCLEOTIDE SEQUENCE [LARGE SCALE MRNA]</scope>
    <source>
        <strain>cv. Columbia</strain>
    </source>
</reference>
<reference key="6">
    <citation type="submission" date="1998-06" db="EMBL/GenBank/DDBJ databases">
        <title>Large-scale screening of phytochrome-regulated genes in etiolated seedlings of Arabidopsis thaliana using fluorescent differential display.</title>
        <authorList>
            <person name="Kuno N."/>
            <person name="Muramatsu T."/>
            <person name="Hamazato F."/>
            <person name="Furuya M."/>
        </authorList>
    </citation>
    <scope>NUCLEOTIDE SEQUENCE [MRNA] OF 111-265</scope>
    <source>
        <strain>cv. Landsberg erecta</strain>
    </source>
</reference>
<reference key="7">
    <citation type="journal article" date="2000" name="Nature">
        <title>A pigment-binding protein essential for regulation of photosynthetic light harvesting.</title>
        <authorList>
            <person name="Li X.P."/>
            <person name="Bjorkman O."/>
            <person name="Shih C."/>
            <person name="Grossman A.R."/>
            <person name="Rosenquist M."/>
            <person name="Jansson S."/>
            <person name="Niyogi K.K."/>
        </authorList>
    </citation>
    <scope>FUNCTION</scope>
    <scope>SUBCELLULAR LOCATION</scope>
    <scope>DISRUPTION PHENOTYPE</scope>
</reference>
<reference key="8">
    <citation type="journal article" date="2019" name="Photosyn. Res.">
        <title>Genetic characterization of a flap1 null mutation in Arabidopsis npq4 and pgr5 plants suggests that the regulatory role of FLAP1 involves the control of proton homeostasis in chloroplasts.</title>
        <authorList>
            <person name="Trinh M.D.L."/>
            <person name="Sato R."/>
            <person name="Masuda S."/>
        </authorList>
    </citation>
    <scope>FUNCTION</scope>
    <scope>DISRUPTION PHENOTYPE</scope>
    <source>
        <strain>cv. Columbia</strain>
    </source>
</reference>
<reference key="9">
    <citation type="journal article" date="2023" name="FEBS Lett.">
        <title>Arabidopsis mutants lacking DLDG1 and non-photochemical quenching-related proteins reveal the regulatory role of DLDG1 in chloroplast pH homeostasis.</title>
        <authorList>
            <person name="Suzuki K."/>
            <person name="Masuda S."/>
        </authorList>
    </citation>
    <scope>FUNCTION</scope>
    <scope>DISRUPTION PHENOTYPE</scope>
    <source>
        <strain>cv. Columbia</strain>
    </source>
</reference>
<proteinExistence type="evidence at transcript level"/>
<protein>
    <recommendedName>
        <fullName evidence="7">Photosystem II 22 kDa protein, chloroplastic</fullName>
    </recommendedName>
    <alternativeName>
        <fullName evidence="5">CP22</fullName>
    </alternativeName>
    <alternativeName>
        <fullName evidence="6">Protein NONPHOTOCHEMICAL QUENCHING 4</fullName>
    </alternativeName>
    <alternativeName>
        <fullName evidence="7">Protein PHOTOSYSTEM II SUBUNIT S</fullName>
    </alternativeName>
</protein>
<accession>Q9XF91</accession>
<accession>Q56XH2</accession>
<accession>Q94EI1</accession>
<accession>Q9ST34</accession>
<organism>
    <name type="scientific">Arabidopsis thaliana</name>
    <name type="common">Mouse-ear cress</name>
    <dbReference type="NCBI Taxonomy" id="3702"/>
    <lineage>
        <taxon>Eukaryota</taxon>
        <taxon>Viridiplantae</taxon>
        <taxon>Streptophyta</taxon>
        <taxon>Embryophyta</taxon>
        <taxon>Tracheophyta</taxon>
        <taxon>Spermatophyta</taxon>
        <taxon>Magnoliopsida</taxon>
        <taxon>eudicotyledons</taxon>
        <taxon>Gunneridae</taxon>
        <taxon>Pentapetalae</taxon>
        <taxon>rosids</taxon>
        <taxon>malvids</taxon>
        <taxon>Brassicales</taxon>
        <taxon>Brassicaceae</taxon>
        <taxon>Camelineae</taxon>
        <taxon>Arabidopsis</taxon>
    </lineage>
</organism>
<feature type="transit peptide" description="Chloroplast" evidence="1">
    <location>
        <begin position="1"/>
        <end position="59"/>
    </location>
</feature>
<feature type="chain" id="PRO_0000007805" description="Photosystem II 22 kDa protein, chloroplastic">
    <location>
        <begin position="60"/>
        <end position="265"/>
    </location>
</feature>
<feature type="transmembrane region" description="Helical" evidence="1">
    <location>
        <begin position="96"/>
        <end position="116"/>
    </location>
</feature>
<feature type="transmembrane region" description="Helical" evidence="1">
    <location>
        <begin position="130"/>
        <end position="150"/>
    </location>
</feature>
<feature type="transmembrane region" description="Helical" evidence="1">
    <location>
        <begin position="195"/>
        <end position="215"/>
    </location>
</feature>
<feature type="transmembrane region" description="Helical" evidence="1">
    <location>
        <begin position="229"/>
        <end position="249"/>
    </location>
</feature>
<feature type="repeat" description="1">
    <location>
        <begin position="54"/>
        <end position="158"/>
    </location>
</feature>
<feature type="repeat" description="2">
    <location>
        <begin position="159"/>
        <end position="264"/>
    </location>
</feature>
<feature type="sequence conflict" description="In Ref. 4; AAK95290/AAN72262." evidence="7" ref="4">
    <original>M</original>
    <variation>F</variation>
    <location>
        <position position="5"/>
    </location>
</feature>
<sequence>MAQTMLLTSGVTAGHFLRNKSPLAQPKVHHLFLSGNSPVALPSRRQSFVPLALFKPKTKAAPKKVEKPKSKVEDGIFGTSGGIGFTKANELFVGRVAMIGFAASLLGEALTGKGILAQLNLETGIPIYEAEPLLLFFILFTLLGAIGALGDRGKFVDDPPTGLEKAVIPPGKNVRSALGLKEQGPLFGFTKANELFVGRLAQLGIAFSLIGEIITGKGALAQLNIETGIPIQDIEPLVLLNVAFFFFAAINPGNGKFITDDGEES</sequence>
<comment type="function">
    <text evidence="2 3 4">Plays an important role in non-photochemical quenching (NPQ), a process maintains the balance between dissipation and utilization of light energy to minimize generation of oxidizing molecules, thereby protecting the plant against photo-oxidative damage; acts upstream of DLDG1 (PubMed:10667783, PubMed:30390180, PubMed:37339934). Is not necessary for efficient light harvesting and photosynthesis (PubMed:10667783).</text>
</comment>
<comment type="subcellular location">
    <subcellularLocation>
        <location evidence="2">Plastid</location>
        <location evidence="2">Chloroplast thylakoid membrane</location>
        <topology evidence="1">Multi-pass membrane protein</topology>
    </subcellularLocation>
</comment>
<comment type="alternative products">
    <event type="alternative splicing"/>
    <isoform>
        <id>Q9XF91-1</id>
        <name>1</name>
        <sequence type="displayed"/>
    </isoform>
    <text>A number of isoforms are produced. According to EST sequences.</text>
</comment>
<comment type="disruption phenotype">
    <text evidence="2 3 4">Normal green leaves under continuous-light conditions (PubMed:30390180, PubMed:37339934). Non-photochemical quenching (NPQ) phenotype (PubMed:10667783). Accumulation of purple-colored anthocyanins leading to dark leaves after a prolonged exposure to fluctuating light (PubMed:30390180). The double mutant missing DLDG1 and PsbS/NPQ4 (dldg1 npq4) has a pale-green phenotype similar to the dldlg1 simple mutant in continuous light, and an identically reduced NPQ induction as in the npq4 single mutant (PubMed:37339934). In the double mutant flap1 npq4, pale green leaves with reduced chlorophyll (Chl) content after exposure to fluctuating light, and similar NPQ kinetics and other photosynthetic parameters under constant or fluctuating actinic ligh than in the single mutant npq4 are observed (PubMed:30390180). However, after a prolonged exposure to fluctuating light, flap1 npq4 leaves become darker due to the accumulation of purple-colored anthocyanins (PubMed:30390180).</text>
</comment>
<comment type="similarity">
    <text evidence="7">Belongs to the ELIP/psbS family.</text>
</comment>
<keyword id="KW-0025">Alternative splicing</keyword>
<keyword id="KW-0150">Chloroplast</keyword>
<keyword id="KW-0472">Membrane</keyword>
<keyword id="KW-0602">Photosynthesis</keyword>
<keyword id="KW-0604">Photosystem II</keyword>
<keyword id="KW-0934">Plastid</keyword>
<keyword id="KW-1185">Reference proteome</keyword>
<keyword id="KW-0677">Repeat</keyword>
<keyword id="KW-0793">Thylakoid</keyword>
<keyword id="KW-0809">Transit peptide</keyword>
<keyword id="KW-0812">Transmembrane</keyword>
<keyword id="KW-1133">Transmembrane helix</keyword>
<name>PSBS_ARATH</name>